<keyword id="KW-0963">Cytoplasm</keyword>
<keyword id="KW-0520">NAD</keyword>
<keyword id="KW-0560">Oxidoreductase</keyword>
<keyword id="KW-0664">Pyridoxine biosynthesis</keyword>
<keyword id="KW-1185">Reference proteome</keyword>
<organism>
    <name type="scientific">Escherichia coli O45:K1 (strain S88 / ExPEC)</name>
    <dbReference type="NCBI Taxonomy" id="585035"/>
    <lineage>
        <taxon>Bacteria</taxon>
        <taxon>Pseudomonadati</taxon>
        <taxon>Pseudomonadota</taxon>
        <taxon>Gammaproteobacteria</taxon>
        <taxon>Enterobacterales</taxon>
        <taxon>Enterobacteriaceae</taxon>
        <taxon>Escherichia</taxon>
    </lineage>
</organism>
<feature type="chain" id="PRO_1000186818" description="D-erythrose-4-phosphate dehydrogenase">
    <location>
        <begin position="1"/>
        <end position="339"/>
    </location>
</feature>
<feature type="active site" description="Nucleophile" evidence="1">
    <location>
        <position position="155"/>
    </location>
</feature>
<feature type="binding site" evidence="1">
    <location>
        <begin position="12"/>
        <end position="13"/>
    </location>
    <ligand>
        <name>NAD(+)</name>
        <dbReference type="ChEBI" id="CHEBI:57540"/>
    </ligand>
</feature>
<feature type="binding site" evidence="1">
    <location>
        <position position="81"/>
    </location>
    <ligand>
        <name>NAD(+)</name>
        <dbReference type="ChEBI" id="CHEBI:57540"/>
    </ligand>
</feature>
<feature type="binding site" evidence="1">
    <location>
        <begin position="154"/>
        <end position="156"/>
    </location>
    <ligand>
        <name>substrate</name>
    </ligand>
</feature>
<feature type="binding site" evidence="1">
    <location>
        <position position="200"/>
    </location>
    <ligand>
        <name>substrate</name>
    </ligand>
</feature>
<feature type="binding site" evidence="1">
    <location>
        <begin position="213"/>
        <end position="214"/>
    </location>
    <ligand>
        <name>substrate</name>
    </ligand>
</feature>
<feature type="binding site" evidence="1">
    <location>
        <position position="236"/>
    </location>
    <ligand>
        <name>substrate</name>
    </ligand>
</feature>
<feature type="binding site" evidence="1">
    <location>
        <position position="318"/>
    </location>
    <ligand>
        <name>NAD(+)</name>
        <dbReference type="ChEBI" id="CHEBI:57540"/>
    </ligand>
</feature>
<feature type="site" description="Activates thiol group during catalysis" evidence="1">
    <location>
        <position position="182"/>
    </location>
</feature>
<protein>
    <recommendedName>
        <fullName evidence="1">D-erythrose-4-phosphate dehydrogenase</fullName>
        <shortName evidence="1">E4PDH</shortName>
        <ecNumber evidence="1">1.2.1.72</ecNumber>
    </recommendedName>
</protein>
<name>E4PD_ECO45</name>
<reference key="1">
    <citation type="journal article" date="2009" name="PLoS Genet.">
        <title>Organised genome dynamics in the Escherichia coli species results in highly diverse adaptive paths.</title>
        <authorList>
            <person name="Touchon M."/>
            <person name="Hoede C."/>
            <person name="Tenaillon O."/>
            <person name="Barbe V."/>
            <person name="Baeriswyl S."/>
            <person name="Bidet P."/>
            <person name="Bingen E."/>
            <person name="Bonacorsi S."/>
            <person name="Bouchier C."/>
            <person name="Bouvet O."/>
            <person name="Calteau A."/>
            <person name="Chiapello H."/>
            <person name="Clermont O."/>
            <person name="Cruveiller S."/>
            <person name="Danchin A."/>
            <person name="Diard M."/>
            <person name="Dossat C."/>
            <person name="Karoui M.E."/>
            <person name="Frapy E."/>
            <person name="Garry L."/>
            <person name="Ghigo J.M."/>
            <person name="Gilles A.M."/>
            <person name="Johnson J."/>
            <person name="Le Bouguenec C."/>
            <person name="Lescat M."/>
            <person name="Mangenot S."/>
            <person name="Martinez-Jehanne V."/>
            <person name="Matic I."/>
            <person name="Nassif X."/>
            <person name="Oztas S."/>
            <person name="Petit M.A."/>
            <person name="Pichon C."/>
            <person name="Rouy Z."/>
            <person name="Ruf C.S."/>
            <person name="Schneider D."/>
            <person name="Tourret J."/>
            <person name="Vacherie B."/>
            <person name="Vallenet D."/>
            <person name="Medigue C."/>
            <person name="Rocha E.P.C."/>
            <person name="Denamur E."/>
        </authorList>
    </citation>
    <scope>NUCLEOTIDE SEQUENCE [LARGE SCALE GENOMIC DNA]</scope>
    <source>
        <strain>S88 / ExPEC</strain>
    </source>
</reference>
<comment type="function">
    <text evidence="1">Catalyzes the NAD-dependent conversion of D-erythrose 4-phosphate to 4-phosphoerythronate.</text>
</comment>
<comment type="catalytic activity">
    <reaction evidence="1">
        <text>D-erythrose 4-phosphate + NAD(+) + H2O = 4-phospho-D-erythronate + NADH + 2 H(+)</text>
        <dbReference type="Rhea" id="RHEA:12056"/>
        <dbReference type="ChEBI" id="CHEBI:15377"/>
        <dbReference type="ChEBI" id="CHEBI:15378"/>
        <dbReference type="ChEBI" id="CHEBI:16897"/>
        <dbReference type="ChEBI" id="CHEBI:57540"/>
        <dbReference type="ChEBI" id="CHEBI:57945"/>
        <dbReference type="ChEBI" id="CHEBI:58766"/>
        <dbReference type="EC" id="1.2.1.72"/>
    </reaction>
</comment>
<comment type="pathway">
    <text evidence="1">Cofactor biosynthesis; pyridoxine 5'-phosphate biosynthesis; pyridoxine 5'-phosphate from D-erythrose 4-phosphate: step 1/5.</text>
</comment>
<comment type="subunit">
    <text evidence="1">Homotetramer.</text>
</comment>
<comment type="subcellular location">
    <subcellularLocation>
        <location evidence="1">Cytoplasm</location>
    </subcellularLocation>
</comment>
<comment type="similarity">
    <text evidence="1">Belongs to the glyceraldehyde-3-phosphate dehydrogenase family. Epd subfamily.</text>
</comment>
<accession>B7MMA9</accession>
<proteinExistence type="inferred from homology"/>
<sequence>MTVRVAINGFGRIGRNVVRALYESGRRAEITVVAINELADAAGMAHLLKYDTSHGRFAWEVRQERDQLFVGDDAIRVLHERSLQSLPWRELGVDVVLDCTGVYGSREHGEAHIAAGAKKVLFSHPGSNDLDTTVVYGVNQDQLRAEHRIVSNASCTTNCIIPVIKLLDDAYGIESGTVTTIHSAMHDQQVIDAYHPDLRRTRAASQSIIPVDTKLAAGITRFFPQFNDRFEAIAVRVPTINVTAIDLSVTVKKPVKANEVNLLLQKAAQGAFHGIVDYAELPLVSVDFNHDPHSAIVDGTQTRVSGAHLIKTLVWCDNEWGFANRMLDTTLAMATVAFR</sequence>
<gene>
    <name evidence="1" type="primary">epd</name>
    <name type="ordered locus">ECS88_3203</name>
</gene>
<evidence type="ECO:0000255" key="1">
    <source>
        <dbReference type="HAMAP-Rule" id="MF_01640"/>
    </source>
</evidence>
<dbReference type="EC" id="1.2.1.72" evidence="1"/>
<dbReference type="EMBL" id="CU928161">
    <property type="protein sequence ID" value="CAR04438.1"/>
    <property type="molecule type" value="Genomic_DNA"/>
</dbReference>
<dbReference type="RefSeq" id="WP_000218482.1">
    <property type="nucleotide sequence ID" value="NC_011742.1"/>
</dbReference>
<dbReference type="SMR" id="B7MMA9"/>
<dbReference type="KEGG" id="ecz:ECS88_3203"/>
<dbReference type="HOGENOM" id="CLU_030140_0_2_6"/>
<dbReference type="UniPathway" id="UPA00244">
    <property type="reaction ID" value="UER00309"/>
</dbReference>
<dbReference type="Proteomes" id="UP000000747">
    <property type="component" value="Chromosome"/>
</dbReference>
<dbReference type="GO" id="GO:0005737">
    <property type="term" value="C:cytoplasm"/>
    <property type="evidence" value="ECO:0007669"/>
    <property type="project" value="UniProtKB-SubCell"/>
</dbReference>
<dbReference type="GO" id="GO:0048001">
    <property type="term" value="F:erythrose-4-phosphate dehydrogenase activity"/>
    <property type="evidence" value="ECO:0007669"/>
    <property type="project" value="UniProtKB-UniRule"/>
</dbReference>
<dbReference type="GO" id="GO:0051287">
    <property type="term" value="F:NAD binding"/>
    <property type="evidence" value="ECO:0007669"/>
    <property type="project" value="InterPro"/>
</dbReference>
<dbReference type="GO" id="GO:0042823">
    <property type="term" value="P:pyridoxal phosphate biosynthetic process"/>
    <property type="evidence" value="ECO:0007669"/>
    <property type="project" value="UniProtKB-UniRule"/>
</dbReference>
<dbReference type="GO" id="GO:0008615">
    <property type="term" value="P:pyridoxine biosynthetic process"/>
    <property type="evidence" value="ECO:0007669"/>
    <property type="project" value="UniProtKB-UniRule"/>
</dbReference>
<dbReference type="CDD" id="cd23937">
    <property type="entry name" value="GAPDH_C_E4PDH"/>
    <property type="match status" value="1"/>
</dbReference>
<dbReference type="CDD" id="cd17892">
    <property type="entry name" value="GAPDH_N_E4PDH"/>
    <property type="match status" value="1"/>
</dbReference>
<dbReference type="FunFam" id="3.30.360.10:FF:000007">
    <property type="entry name" value="D-erythrose-4-phosphate dehydrogenase"/>
    <property type="match status" value="1"/>
</dbReference>
<dbReference type="FunFam" id="3.40.50.720:FF:000001">
    <property type="entry name" value="Glyceraldehyde-3-phosphate dehydrogenase"/>
    <property type="match status" value="1"/>
</dbReference>
<dbReference type="Gene3D" id="3.30.360.10">
    <property type="entry name" value="Dihydrodipicolinate Reductase, domain 2"/>
    <property type="match status" value="1"/>
</dbReference>
<dbReference type="Gene3D" id="3.40.50.720">
    <property type="entry name" value="NAD(P)-binding Rossmann-like Domain"/>
    <property type="match status" value="1"/>
</dbReference>
<dbReference type="HAMAP" id="MF_01640">
    <property type="entry name" value="E4P_dehydrog"/>
    <property type="match status" value="1"/>
</dbReference>
<dbReference type="InterPro" id="IPR006422">
    <property type="entry name" value="E4P_DH_bac"/>
</dbReference>
<dbReference type="InterPro" id="IPR020831">
    <property type="entry name" value="GlycerAld/Erythrose_P_DH"/>
</dbReference>
<dbReference type="InterPro" id="IPR020830">
    <property type="entry name" value="GlycerAld_3-P_DH_AS"/>
</dbReference>
<dbReference type="InterPro" id="IPR020829">
    <property type="entry name" value="GlycerAld_3-P_DH_cat"/>
</dbReference>
<dbReference type="InterPro" id="IPR020828">
    <property type="entry name" value="GlycerAld_3-P_DH_NAD(P)-bd"/>
</dbReference>
<dbReference type="InterPro" id="IPR036291">
    <property type="entry name" value="NAD(P)-bd_dom_sf"/>
</dbReference>
<dbReference type="NCBIfam" id="TIGR01532">
    <property type="entry name" value="E4PD_g-proteo"/>
    <property type="match status" value="1"/>
</dbReference>
<dbReference type="NCBIfam" id="NF010058">
    <property type="entry name" value="PRK13535.1"/>
    <property type="match status" value="1"/>
</dbReference>
<dbReference type="PANTHER" id="PTHR43148">
    <property type="entry name" value="GLYCERALDEHYDE-3-PHOSPHATE DEHYDROGENASE 2"/>
    <property type="match status" value="1"/>
</dbReference>
<dbReference type="Pfam" id="PF02800">
    <property type="entry name" value="Gp_dh_C"/>
    <property type="match status" value="1"/>
</dbReference>
<dbReference type="Pfam" id="PF00044">
    <property type="entry name" value="Gp_dh_N"/>
    <property type="match status" value="1"/>
</dbReference>
<dbReference type="PIRSF" id="PIRSF000149">
    <property type="entry name" value="GAP_DH"/>
    <property type="match status" value="1"/>
</dbReference>
<dbReference type="PRINTS" id="PR00078">
    <property type="entry name" value="G3PDHDRGNASE"/>
</dbReference>
<dbReference type="SMART" id="SM00846">
    <property type="entry name" value="Gp_dh_N"/>
    <property type="match status" value="1"/>
</dbReference>
<dbReference type="SUPFAM" id="SSF55347">
    <property type="entry name" value="Glyceraldehyde-3-phosphate dehydrogenase-like, C-terminal domain"/>
    <property type="match status" value="1"/>
</dbReference>
<dbReference type="SUPFAM" id="SSF51735">
    <property type="entry name" value="NAD(P)-binding Rossmann-fold domains"/>
    <property type="match status" value="1"/>
</dbReference>
<dbReference type="PROSITE" id="PS00071">
    <property type="entry name" value="GAPDH"/>
    <property type="match status" value="1"/>
</dbReference>